<gene>
    <name evidence="1" type="primary">panD</name>
    <name type="ordered locus">Noca_0461</name>
</gene>
<feature type="chain" id="PRO_0000307039" description="Aspartate 1-decarboxylase beta chain" evidence="1">
    <location>
        <begin position="1"/>
        <end position="24"/>
    </location>
</feature>
<feature type="chain" id="PRO_0000307040" description="Aspartate 1-decarboxylase alpha chain" evidence="1">
    <location>
        <begin position="25"/>
        <end position="139"/>
    </location>
</feature>
<feature type="region of interest" description="Disordered" evidence="2">
    <location>
        <begin position="117"/>
        <end position="139"/>
    </location>
</feature>
<feature type="active site" description="Schiff-base intermediate with substrate; via pyruvic acid" evidence="1">
    <location>
        <position position="25"/>
    </location>
</feature>
<feature type="active site" description="Proton donor" evidence="1">
    <location>
        <position position="58"/>
    </location>
</feature>
<feature type="binding site" evidence="1">
    <location>
        <position position="57"/>
    </location>
    <ligand>
        <name>substrate</name>
    </ligand>
</feature>
<feature type="binding site" evidence="1">
    <location>
        <begin position="73"/>
        <end position="75"/>
    </location>
    <ligand>
        <name>substrate</name>
    </ligand>
</feature>
<feature type="modified residue" description="Pyruvic acid (Ser)" evidence="1">
    <location>
        <position position="25"/>
    </location>
</feature>
<proteinExistence type="inferred from homology"/>
<reference key="1">
    <citation type="submission" date="2006-12" db="EMBL/GenBank/DDBJ databases">
        <title>Complete sequence of chromosome 1 of Nocardioides sp. JS614.</title>
        <authorList>
            <person name="Copeland A."/>
            <person name="Lucas S."/>
            <person name="Lapidus A."/>
            <person name="Barry K."/>
            <person name="Detter J.C."/>
            <person name="Glavina del Rio T."/>
            <person name="Hammon N."/>
            <person name="Israni S."/>
            <person name="Dalin E."/>
            <person name="Tice H."/>
            <person name="Pitluck S."/>
            <person name="Thompson L.S."/>
            <person name="Brettin T."/>
            <person name="Bruce D."/>
            <person name="Han C."/>
            <person name="Tapia R."/>
            <person name="Schmutz J."/>
            <person name="Larimer F."/>
            <person name="Land M."/>
            <person name="Hauser L."/>
            <person name="Kyrpides N."/>
            <person name="Kim E."/>
            <person name="Mattes T."/>
            <person name="Gossett J."/>
            <person name="Richardson P."/>
        </authorList>
    </citation>
    <scope>NUCLEOTIDE SEQUENCE [LARGE SCALE GENOMIC DNA]</scope>
    <source>
        <strain>ATCC BAA-499 / JS614</strain>
    </source>
</reference>
<accession>A1SDW8</accession>
<protein>
    <recommendedName>
        <fullName evidence="1">Aspartate 1-decarboxylase</fullName>
        <ecNumber evidence="1">4.1.1.11</ecNumber>
    </recommendedName>
    <alternativeName>
        <fullName evidence="1">Aspartate alpha-decarboxylase</fullName>
    </alternativeName>
    <component>
        <recommendedName>
            <fullName evidence="1">Aspartate 1-decarboxylase beta chain</fullName>
        </recommendedName>
    </component>
    <component>
        <recommendedName>
            <fullName evidence="1">Aspartate 1-decarboxylase alpha chain</fullName>
        </recommendedName>
    </component>
</protein>
<comment type="function">
    <text evidence="1">Catalyzes the pyruvoyl-dependent decarboxylation of aspartate to produce beta-alanine.</text>
</comment>
<comment type="catalytic activity">
    <reaction evidence="1">
        <text>L-aspartate + H(+) = beta-alanine + CO2</text>
        <dbReference type="Rhea" id="RHEA:19497"/>
        <dbReference type="ChEBI" id="CHEBI:15378"/>
        <dbReference type="ChEBI" id="CHEBI:16526"/>
        <dbReference type="ChEBI" id="CHEBI:29991"/>
        <dbReference type="ChEBI" id="CHEBI:57966"/>
        <dbReference type="EC" id="4.1.1.11"/>
    </reaction>
</comment>
<comment type="cofactor">
    <cofactor evidence="1">
        <name>pyruvate</name>
        <dbReference type="ChEBI" id="CHEBI:15361"/>
    </cofactor>
    <text evidence="1">Binds 1 pyruvoyl group covalently per subunit.</text>
</comment>
<comment type="pathway">
    <text evidence="1">Cofactor biosynthesis; (R)-pantothenate biosynthesis; beta-alanine from L-aspartate: step 1/1.</text>
</comment>
<comment type="subunit">
    <text evidence="1">Heterooctamer of four alpha and four beta subunits.</text>
</comment>
<comment type="subcellular location">
    <subcellularLocation>
        <location evidence="1">Cytoplasm</location>
    </subcellularLocation>
</comment>
<comment type="PTM">
    <text evidence="1">Is synthesized initially as an inactive proenzyme, which is activated by self-cleavage at a specific serine bond to produce a beta-subunit with a hydroxyl group at its C-terminus and an alpha-subunit with a pyruvoyl group at its N-terminus.</text>
</comment>
<comment type="similarity">
    <text evidence="1">Belongs to the PanD family.</text>
</comment>
<comment type="sequence caution" evidence="3">
    <conflict type="erroneous initiation">
        <sequence resource="EMBL-CDS" id="ABL80003"/>
    </conflict>
</comment>
<sequence length="139" mass="14643">MLRTMMKSKIHRATVTQADLHYVGSVTVDEDLLDAADLLPGELVHIVDIDNGARLETYTIAGERGSGVIGINGAAARLVHPGDLVILIAYGQMEDVEAKGFEPHVVFVDADNRVVSTGSDPADAPAGSGLLRGDRPAGR</sequence>
<evidence type="ECO:0000255" key="1">
    <source>
        <dbReference type="HAMAP-Rule" id="MF_00446"/>
    </source>
</evidence>
<evidence type="ECO:0000256" key="2">
    <source>
        <dbReference type="SAM" id="MobiDB-lite"/>
    </source>
</evidence>
<evidence type="ECO:0000305" key="3"/>
<dbReference type="EC" id="4.1.1.11" evidence="1"/>
<dbReference type="EMBL" id="CP000509">
    <property type="protein sequence ID" value="ABL80003.1"/>
    <property type="status" value="ALT_INIT"/>
    <property type="molecule type" value="Genomic_DNA"/>
</dbReference>
<dbReference type="RefSeq" id="WP_041546119.1">
    <property type="nucleotide sequence ID" value="NC_008699.1"/>
</dbReference>
<dbReference type="SMR" id="A1SDW8"/>
<dbReference type="STRING" id="196162.Noca_0461"/>
<dbReference type="KEGG" id="nca:Noca_0461"/>
<dbReference type="eggNOG" id="COG0853">
    <property type="taxonomic scope" value="Bacteria"/>
</dbReference>
<dbReference type="HOGENOM" id="CLU_115305_2_0_11"/>
<dbReference type="OrthoDB" id="9803983at2"/>
<dbReference type="UniPathway" id="UPA00028">
    <property type="reaction ID" value="UER00002"/>
</dbReference>
<dbReference type="Proteomes" id="UP000000640">
    <property type="component" value="Chromosome"/>
</dbReference>
<dbReference type="GO" id="GO:0005829">
    <property type="term" value="C:cytosol"/>
    <property type="evidence" value="ECO:0007669"/>
    <property type="project" value="TreeGrafter"/>
</dbReference>
<dbReference type="GO" id="GO:0004068">
    <property type="term" value="F:aspartate 1-decarboxylase activity"/>
    <property type="evidence" value="ECO:0007669"/>
    <property type="project" value="UniProtKB-UniRule"/>
</dbReference>
<dbReference type="GO" id="GO:0006523">
    <property type="term" value="P:alanine biosynthetic process"/>
    <property type="evidence" value="ECO:0007669"/>
    <property type="project" value="InterPro"/>
</dbReference>
<dbReference type="GO" id="GO:0015940">
    <property type="term" value="P:pantothenate biosynthetic process"/>
    <property type="evidence" value="ECO:0007669"/>
    <property type="project" value="UniProtKB-UniRule"/>
</dbReference>
<dbReference type="CDD" id="cd06919">
    <property type="entry name" value="Asp_decarbox"/>
    <property type="match status" value="1"/>
</dbReference>
<dbReference type="Gene3D" id="2.40.40.20">
    <property type="match status" value="1"/>
</dbReference>
<dbReference type="HAMAP" id="MF_00446">
    <property type="entry name" value="PanD"/>
    <property type="match status" value="1"/>
</dbReference>
<dbReference type="InterPro" id="IPR009010">
    <property type="entry name" value="Asp_de-COase-like_dom_sf"/>
</dbReference>
<dbReference type="InterPro" id="IPR003190">
    <property type="entry name" value="Asp_decarbox"/>
</dbReference>
<dbReference type="NCBIfam" id="TIGR00223">
    <property type="entry name" value="panD"/>
    <property type="match status" value="1"/>
</dbReference>
<dbReference type="PANTHER" id="PTHR21012">
    <property type="entry name" value="ASPARTATE 1-DECARBOXYLASE"/>
    <property type="match status" value="1"/>
</dbReference>
<dbReference type="PANTHER" id="PTHR21012:SF0">
    <property type="entry name" value="ASPARTATE 1-DECARBOXYLASE"/>
    <property type="match status" value="1"/>
</dbReference>
<dbReference type="Pfam" id="PF02261">
    <property type="entry name" value="Asp_decarbox"/>
    <property type="match status" value="1"/>
</dbReference>
<dbReference type="PIRSF" id="PIRSF006246">
    <property type="entry name" value="Asp_decarbox"/>
    <property type="match status" value="1"/>
</dbReference>
<dbReference type="SUPFAM" id="SSF50692">
    <property type="entry name" value="ADC-like"/>
    <property type="match status" value="1"/>
</dbReference>
<organism>
    <name type="scientific">Nocardioides sp. (strain ATCC BAA-499 / JS614)</name>
    <dbReference type="NCBI Taxonomy" id="196162"/>
    <lineage>
        <taxon>Bacteria</taxon>
        <taxon>Bacillati</taxon>
        <taxon>Actinomycetota</taxon>
        <taxon>Actinomycetes</taxon>
        <taxon>Propionibacteriales</taxon>
        <taxon>Nocardioidaceae</taxon>
        <taxon>Nocardioides</taxon>
    </lineage>
</organism>
<name>PAND_NOCSJ</name>
<keyword id="KW-0068">Autocatalytic cleavage</keyword>
<keyword id="KW-0963">Cytoplasm</keyword>
<keyword id="KW-0210">Decarboxylase</keyword>
<keyword id="KW-0456">Lyase</keyword>
<keyword id="KW-0566">Pantothenate biosynthesis</keyword>
<keyword id="KW-0670">Pyruvate</keyword>
<keyword id="KW-1185">Reference proteome</keyword>
<keyword id="KW-0704">Schiff base</keyword>
<keyword id="KW-0865">Zymogen</keyword>